<comment type="function">
    <molecule>Capsid protein C</molecule>
    <text evidence="6">Plays a role in virus budding by binding to the cell membrane and gathering the viral RNA into a nucleocapsid that forms the core of a mature virus particle. During virus entry, may induce genome penetration into the host cytoplasm after hemifusion induced by the surface proteins. Can migrate to the cell nucleus where it modulates host functions. Overcomes the anti-viral effects of host EXOC1 by sequestering and degrading the latter through the proteasome degradation pathway.</text>
</comment>
<comment type="function">
    <molecule>Capsid protein C</molecule>
    <text evidence="1">Inhibits RNA silencing by interfering with host Dicer.</text>
</comment>
<comment type="function">
    <molecule>Peptide pr</molecule>
    <text evidence="6">Prevents premature fusion activity of envelope proteins in trans-Golgi by binding to envelope protein E at pH 6.0. After virion release in extracellular space, gets dissociated from E dimers.</text>
</comment>
<comment type="function">
    <molecule>Protein prM</molecule>
    <text evidence="6">Acts as a chaperone for envelope protein E during intracellular virion assembly by masking and inactivating envelope protein E fusion peptide. prM is the only viral peptide matured by host furin in the trans-Golgi network probably to avoid catastrophic activation of the viral fusion activity in acidic Golgi compartment prior to virion release. prM-E cleavage is inefficient, and many virions are only partially matured. These uncleaved prM would play a role in immune evasion.</text>
</comment>
<comment type="function">
    <molecule>Small envelope protein M</molecule>
    <text evidence="6">May play a role in virus budding. Exerts cytotoxic effects by activating a mitochondrial apoptotic pathway through M ectodomain. May display a viroporin activity.</text>
</comment>
<comment type="function">
    <molecule>Envelope protein E</molecule>
    <text evidence="6">Binds to host cell surface receptor and mediates fusion between viral and cellular membranes. Efficient virus attachment to cell is, at least in part, mediated by host HSPA5. Envelope protein is synthesized in the endoplasmic reticulum in the form of heterodimer with protein prM. They play a role in virion budding in the ER, and the newly formed immature particle is covered with 60 spikes composed of heterodimer between precursor prM and envelope protein E. The virion is transported to the Golgi apparatus where the low pH causes dissociation of PrM-E heterodimers and formation of E homodimers. prM-E cleavage is inefficient, and many virions are only partially matured. These uncleaved prM would play a role in immune evasion.</text>
</comment>
<comment type="function">
    <molecule>Non-structural protein 1</molecule>
    <text evidence="11">Involved in immune evasion, pathogenesis and viral replication. Once cleaved off the polyprotein, is targeted to three destinations: the viral replication cycle, the plasma membrane and the extracellular compartment. Essential for viral replication. Required for formation of the replication complex and recruitment of other non-structural proteins to the ER-derived membrane structures. Excreted as a hexameric lipoparticle that plays a role against host immune response. Antagonizing the complement function. Binds to the host macrophages and dendritic cells. Inhibits signal transduction originating from Toll-like receptor 3 (TLR3).</text>
</comment>
<comment type="function">
    <molecule>Non-structural protein 2A</molecule>
    <text evidence="3">Component of the viral RNA replication complex that functions in virion assembly and antagonizes the host alpha/beta interferon antiviral response.</text>
</comment>
<comment type="function">
    <molecule>Serine protease subunit NS2B</molecule>
    <text evidence="7 16">Required cofactor for the serine protease function of NS3 (By similarity). May have membrane-destabilizing activity and form viroporins (By similarity).</text>
</comment>
<comment type="function">
    <molecule>Serine protease NS3</molecule>
    <text evidence="7 17">Displays three enzymatic activities: serine protease, NTPase and RNA helicase (By similarity). NS3 serine protease, in association with NS2B, performs its autocleavage and cleaves the polyprotein at dibasic sites in the cytoplasm: C-prM, NS2A-NS2B, NS2B-NS3, NS3-NS4A, NS4A-2K and NS4B-NS5 (By similarity). NS3 RNA helicase binds RNA and unwinds dsRNA in the 3' to 5' direction.</text>
</comment>
<comment type="function">
    <molecule>Non-structural protein 4A</molecule>
    <text evidence="11">Regulates the ATPase activity of the NS3 helicase activity. NS4A allows NS3 helicase to conserve energy during unwinding.</text>
</comment>
<comment type="function">
    <molecule>Peptide 2k</molecule>
    <text evidence="6">Functions as a signal peptide for NS4B and is required for the interferon antagonism activity of the latter.</text>
</comment>
<comment type="function">
    <molecule>Non-structural protein 4B</molecule>
    <text evidence="11">Induces the formation of ER-derived membrane vesicles where the viral replication takes place (By similarity). Inhibits interferon (IFN)-induced host STAT1 phosphorylation and nuclear translocation, thereby preventing the establishment of cellular antiviral state by blocking the IFN-alpha/beta pathway (By similarity). Inhibits STAT2 translocation in the nucleus after IFN-alpha treatment (By similarity).</text>
</comment>
<comment type="function">
    <molecule>RNA-directed RNA polymerase NS5</molecule>
    <text evidence="7 11">Replicates the viral (+) and (-) RNA genome, and performs the capping of genomes in the cytoplasm (By similarity). NS5 methylates viral RNA cap at guanine N-7 and ribose 2'-O positions (By similarity). Besides its role in RNA genome replication, also prevents the establishment of cellular antiviral state by blocking the interferon-alpha/beta (IFN-alpha/beta) signaling pathway (By similarity). Inhibits host TYK2 and STAT2 phosphorylation, thereby preventing activation of JAK-STAT signaling pathway (By similarity).</text>
</comment>
<comment type="catalytic activity">
    <reaction evidence="7">
        <text>Selective hydrolysis of -Xaa-Xaa-|-Yaa- bonds in which each of the Xaa can be either Arg or Lys and Yaa can be either Ser or Ala.</text>
        <dbReference type="EC" id="3.4.21.91"/>
    </reaction>
</comment>
<comment type="catalytic activity">
    <reaction evidence="13">
        <text>RNA(n) + a ribonucleoside 5'-triphosphate = RNA(n+1) + diphosphate</text>
        <dbReference type="Rhea" id="RHEA:21248"/>
        <dbReference type="Rhea" id="RHEA-COMP:14527"/>
        <dbReference type="Rhea" id="RHEA-COMP:17342"/>
        <dbReference type="ChEBI" id="CHEBI:33019"/>
        <dbReference type="ChEBI" id="CHEBI:61557"/>
        <dbReference type="ChEBI" id="CHEBI:140395"/>
        <dbReference type="EC" id="2.7.7.48"/>
    </reaction>
</comment>
<comment type="catalytic activity">
    <reaction evidence="7">
        <text>a ribonucleoside 5'-triphosphate + H2O = a ribonucleoside 5'-diphosphate + phosphate + H(+)</text>
        <dbReference type="Rhea" id="RHEA:23680"/>
        <dbReference type="ChEBI" id="CHEBI:15377"/>
        <dbReference type="ChEBI" id="CHEBI:15378"/>
        <dbReference type="ChEBI" id="CHEBI:43474"/>
        <dbReference type="ChEBI" id="CHEBI:57930"/>
        <dbReference type="ChEBI" id="CHEBI:61557"/>
        <dbReference type="EC" id="3.6.1.15"/>
    </reaction>
</comment>
<comment type="catalytic activity">
    <reaction evidence="7">
        <text>ATP + H2O = ADP + phosphate + H(+)</text>
        <dbReference type="Rhea" id="RHEA:13065"/>
        <dbReference type="ChEBI" id="CHEBI:15377"/>
        <dbReference type="ChEBI" id="CHEBI:15378"/>
        <dbReference type="ChEBI" id="CHEBI:30616"/>
        <dbReference type="ChEBI" id="CHEBI:43474"/>
        <dbReference type="ChEBI" id="CHEBI:456216"/>
        <dbReference type="EC" id="3.6.4.13"/>
    </reaction>
</comment>
<comment type="catalytic activity">
    <reaction evidence="18">
        <text>a 5'-end (5'-triphosphoguanosine)-ribonucleoside in mRNA + S-adenosyl-L-methionine = a 5'-end (N(7)-methyl 5'-triphosphoguanosine)-ribonucleoside in mRNA + S-adenosyl-L-homocysteine</text>
        <dbReference type="Rhea" id="RHEA:67008"/>
        <dbReference type="Rhea" id="RHEA-COMP:17166"/>
        <dbReference type="Rhea" id="RHEA-COMP:17167"/>
        <dbReference type="ChEBI" id="CHEBI:57856"/>
        <dbReference type="ChEBI" id="CHEBI:59789"/>
        <dbReference type="ChEBI" id="CHEBI:156461"/>
        <dbReference type="ChEBI" id="CHEBI:167617"/>
        <dbReference type="EC" id="2.1.1.56"/>
    </reaction>
</comment>
<comment type="catalytic activity">
    <reaction evidence="18">
        <text>a 5'-end (N(7)-methyl 5'-triphosphoguanosine)-ribonucleoside in mRNA + S-adenosyl-L-methionine = a 5'-end (N(7)-methyl 5'-triphosphoguanosine)-(2'-O-methyl-ribonucleoside) in mRNA + S-adenosyl-L-homocysteine + H(+)</text>
        <dbReference type="Rhea" id="RHEA:67020"/>
        <dbReference type="Rhea" id="RHEA-COMP:17167"/>
        <dbReference type="Rhea" id="RHEA-COMP:17168"/>
        <dbReference type="ChEBI" id="CHEBI:15378"/>
        <dbReference type="ChEBI" id="CHEBI:57856"/>
        <dbReference type="ChEBI" id="CHEBI:59789"/>
        <dbReference type="ChEBI" id="CHEBI:156461"/>
        <dbReference type="ChEBI" id="CHEBI:167609"/>
        <dbReference type="EC" id="2.1.1.57"/>
    </reaction>
</comment>
<comment type="cofactor">
    <cofactor>
        <name>Mn(2+)</name>
        <dbReference type="ChEBI" id="CHEBI:29035"/>
    </cofactor>
    <cofactor>
        <name>Mg(2+)</name>
        <dbReference type="ChEBI" id="CHEBI:18420"/>
    </cofactor>
    <text evidence="7">For RNA-directed RNA polymerase NS5 activity; Mn(2+) is more effective than Mg(2+).</text>
</comment>
<comment type="subunit">
    <molecule>Capsid protein C</molecule>
    <text evidence="6">Homodimer (By similarity). Interacts (via N-terminus) with host EXOC1 (via C-terminus); this interaction results in EXOC1 degradation through the proteasome degradation pathway (By similarity).</text>
</comment>
<comment type="subunit">
    <molecule>Protein prM</molecule>
    <text evidence="6">Forms heterodimers with envelope protein E in the endoplasmic reticulum and Golgi.</text>
</comment>
<comment type="subunit">
    <molecule>Envelope protein E</molecule>
    <text evidence="6">Homodimer; in the endoplasmic reticulum and Golgi (By similarity). Interacts with protein prM (By similarity). Interacts with non-structural protein 1 (By similarity). Interacts with host HSPA5 (By similarity).</text>
</comment>
<comment type="subunit">
    <molecule>Non-structural protein 1</molecule>
    <text evidence="11">Homodimer; Homohexamer when secreted (By similarity). Interacts with envelope protein E (By similarity). NS1 interacts with NS4B (By similarity). Interacts with host complement protein CFH; this interaction leads to the degradation of C3 (By similarity).</text>
</comment>
<comment type="subunit">
    <molecule>Non-structural protein 2A</molecule>
    <text evidence="1">Interacts (via N-terminus) with serine protease NS3.</text>
</comment>
<comment type="subunit">
    <molecule>Serine protease subunit NS2B</molecule>
    <text evidence="6">Forms a heterodimer with serine protease NS3 (By similarity). May form homooligomers (By similarity).</text>
</comment>
<comment type="subunit">
    <molecule>Serine protease NS3</molecule>
    <text evidence="6">Forms a heterodimer with NS2B (By similarity). Interacts with non-structural protein 2A (via N-terminus) (By similarity). Interacts with NS4B (By similarity). Interacts with unphosphorylated RNA-directed RNA polymerase NS5; this interaction stimulates RNA-directed RNA polymerase NS5 guanylyltransferase activity (By similarity). Interacts with host ILF2 (By similarity).</text>
</comment>
<comment type="subunit">
    <molecule>Non-structural protein 4B</molecule>
    <text evidence="6">Interacts with serine protease NS3 (By similarity).</text>
</comment>
<comment type="subunit">
    <molecule>RNA-directed RNA polymerase NS5</molecule>
    <text evidence="6">Homodimer. Interacts with host STAT2; this interaction inhibits the phosphorylation of the latter, and, when all viral proteins are present (polyprotein), targets STAT2 for degradation. Interacts with serine protease NS3.</text>
</comment>
<comment type="subcellular location">
    <molecule>Capsid protein C</molecule>
    <subcellularLocation>
        <location evidence="6">Virion</location>
    </subcellularLocation>
    <subcellularLocation>
        <location evidence="6">Host nucleus</location>
    </subcellularLocation>
    <subcellularLocation>
        <location evidence="2">Host cytoplasm</location>
    </subcellularLocation>
    <subcellularLocation>
        <location evidence="2">Host cytoplasm</location>
        <location evidence="2">Host perinuclear region</location>
    </subcellularLocation>
</comment>
<comment type="subcellular location">
    <molecule>Peptide pr</molecule>
    <subcellularLocation>
        <location evidence="6">Secreted</location>
    </subcellularLocation>
</comment>
<comment type="subcellular location">
    <molecule>Small envelope protein M</molecule>
    <subcellularLocation>
        <location evidence="1">Virion membrane</location>
        <topology evidence="1">Multi-pass membrane protein</topology>
    </subcellularLocation>
    <subcellularLocation>
        <location evidence="1">Host endoplasmic reticulum membrane</location>
        <topology evidence="12">Multi-pass membrane protein</topology>
    </subcellularLocation>
    <text evidence="1">ER membrane retention is mediated by the transmembrane domains.</text>
</comment>
<comment type="subcellular location">
    <molecule>Envelope protein E</molecule>
    <subcellularLocation>
        <location evidence="20">Virion membrane</location>
        <topology evidence="1">Multi-pass membrane protein</topology>
    </subcellularLocation>
    <subcellularLocation>
        <location evidence="1">Host endoplasmic reticulum membrane</location>
        <topology evidence="12">Multi-pass membrane protein</topology>
    </subcellularLocation>
    <subcellularLocation>
        <location evidence="1">Host cell surface</location>
    </subcellularLocation>
    <text evidence="1">ER membrane retention is mediated by the transmembrane domains.</text>
</comment>
<comment type="subcellular location">
    <molecule>Non-structural protein 1</molecule>
    <subcellularLocation>
        <location evidence="6">Secreted</location>
    </subcellularLocation>
    <subcellularLocation>
        <location>Host endoplasmic reticulum membrane</location>
        <topology>Peripheral membrane protein</topology>
        <orientation evidence="6">Lumenal side</orientation>
    </subcellularLocation>
    <text evidence="11">Located in RE-derived vesicles hosting the replication complex.</text>
</comment>
<comment type="subcellular location">
    <molecule>Non-structural protein 2A</molecule>
    <subcellularLocation>
        <location evidence="3">Host endoplasmic reticulum membrane</location>
        <topology evidence="6">Multi-pass membrane protein</topology>
    </subcellularLocation>
</comment>
<comment type="subcellular location">
    <molecule>Serine protease subunit NS2B</molecule>
    <subcellularLocation>
        <location>Host endoplasmic reticulum membrane</location>
        <topology evidence="6">Multi-pass membrane protein</topology>
    </subcellularLocation>
</comment>
<comment type="subcellular location">
    <molecule>Serine protease NS3</molecule>
    <subcellularLocation>
        <location evidence="17">Host endoplasmic reticulum membrane</location>
        <topology evidence="17">Peripheral membrane protein</topology>
        <orientation evidence="17">Cytoplasmic side</orientation>
    </subcellularLocation>
    <text evidence="17">Remains non-covalently associated to serine protease subunit NS2B.</text>
</comment>
<comment type="subcellular location">
    <molecule>Non-structural protein 4A</molecule>
    <subcellularLocation>
        <location evidence="3">Host endoplasmic reticulum membrane</location>
        <topology evidence="6">Multi-pass membrane protein</topology>
    </subcellularLocation>
    <text evidence="6">Located in RE-associated vesicles hosting the replication complex.</text>
</comment>
<comment type="subcellular location">
    <molecule>Non-structural protein 4B</molecule>
    <subcellularLocation>
        <location evidence="6">Host endoplasmic reticulum membrane</location>
        <topology evidence="6">Multi-pass membrane protein</topology>
    </subcellularLocation>
    <text evidence="11">Located in RE-derived vesicles hosting the replication complex.</text>
</comment>
<comment type="subcellular location">
    <molecule>RNA-directed RNA polymerase NS5</molecule>
    <subcellularLocation>
        <location>Host endoplasmic reticulum membrane</location>
        <topology>Peripheral membrane protein</topology>
        <orientation>Cytoplasmic side</orientation>
    </subcellularLocation>
    <subcellularLocation>
        <location evidence="2">Host nucleus</location>
    </subcellularLocation>
    <text evidence="6">Located in RE-associated vesicles hosting the replication complex. NS5 protein is mainly localized in the nucleus rather than in ER vesicles.</text>
</comment>
<comment type="alternative products">
    <event type="ribosomal frameshifting"/>
    <isoform>
        <id>P32886-1</id>
        <name>Genome polyprotein</name>
        <sequence type="displayed"/>
    </isoform>
    <isoform>
        <id>P0DOH8-1</id>
        <name>Structural polyprotein</name>
        <sequence type="external"/>
    </isoform>
</comment>
<comment type="domain">
    <text evidence="6">The transmembrane domains of the small envelope protein M and envelope protein E contain an endoplasmic reticulum retention signal.</text>
</comment>
<comment type="PTM">
    <molecule>Genome polyprotein</molecule>
    <text evidence="6 7">Specific enzymatic cleavages in vivo yield mature proteins (By similarity). Cleavages in the lumen of endoplasmic reticulum are performed by host signal peptidase, whereas cleavages in the cytoplasmic side are performed by serine protease NS3. Signal cleavage at the 2K-4B site requires a prior NS3 protease-mediated cleavage at the 4A-2K site.</text>
</comment>
<comment type="PTM">
    <molecule>Protein prM</molecule>
    <text evidence="6">Cleaved in post-Golgi vesicles by a host furin, releasing the mature small envelope protein M, and peptide pr. This cleavage is incomplete as up to 30% of viral particles still carry uncleaved prM.</text>
</comment>
<comment type="PTM">
    <molecule>Envelope protein E</molecule>
    <text evidence="6">N-glycosylated.</text>
</comment>
<comment type="PTM">
    <molecule>Non-structural protein 1</molecule>
    <text evidence="6">N-glycosylated. The excreted form is glycosylated and this is required for efficient secretion of the protein from infected cells.</text>
</comment>
<comment type="PTM">
    <molecule>Serine protease NS3</molecule>
    <text evidence="9">Acetylated by host KAT5. Acetylation modulates NS3 RNA-binding and unwinding activities and plays an important positive role for viral replication.</text>
</comment>
<comment type="PTM">
    <molecule>RNA-directed RNA polymerase NS5</molecule>
    <text evidence="6">Phosphorylated on serines residues. This phosphorylation may trigger NS5 nuclear localization.</text>
</comment>
<comment type="similarity">
    <text evidence="18">In the N-terminal section; belongs to the class I-like SAM-binding methyltransferase superfamily. mRNA cap 0-1 NS5-type methyltransferase family.</text>
</comment>
<keyword id="KW-0002">3D-structure</keyword>
<keyword id="KW-0007">Acetylation</keyword>
<keyword id="KW-1072">Activation of host autophagy by virus</keyword>
<keyword id="KW-0067">ATP-binding</keyword>
<keyword id="KW-0167">Capsid protein</keyword>
<keyword id="KW-1165">Clathrin-mediated endocytosis of virus by host</keyword>
<keyword id="KW-0165">Cleavage on pair of basic residues</keyword>
<keyword id="KW-1015">Disulfide bond</keyword>
<keyword id="KW-1170">Fusion of virus membrane with host endosomal membrane</keyword>
<keyword id="KW-1168">Fusion of virus membrane with host membrane</keyword>
<keyword id="KW-0325">Glycoprotein</keyword>
<keyword id="KW-0347">Helicase</keyword>
<keyword id="KW-1035">Host cytoplasm</keyword>
<keyword id="KW-1038">Host endoplasmic reticulum</keyword>
<keyword id="KW-1043">Host membrane</keyword>
<keyword id="KW-1048">Host nucleus</keyword>
<keyword id="KW-0945">Host-virus interaction</keyword>
<keyword id="KW-0378">Hydrolase</keyword>
<keyword id="KW-1090">Inhibition of host innate immune response by virus</keyword>
<keyword id="KW-1114">Inhibition of host interferon signaling pathway by virus</keyword>
<keyword id="KW-1105">Inhibition of host STAT1 by virus</keyword>
<keyword id="KW-1106">Inhibition of host STAT2 by virus</keyword>
<keyword id="KW-1112">Inhibition of host TYK2 by virus</keyword>
<keyword id="KW-0922">Interferon antiviral system evasion</keyword>
<keyword id="KW-0472">Membrane</keyword>
<keyword id="KW-0479">Metal-binding</keyword>
<keyword id="KW-0489">Methyltransferase</keyword>
<keyword id="KW-0506">mRNA capping</keyword>
<keyword id="KW-0507">mRNA processing</keyword>
<keyword id="KW-0511">Multifunctional enzyme</keyword>
<keyword id="KW-0547">Nucleotide-binding</keyword>
<keyword id="KW-0548">Nucleotidyltransferase</keyword>
<keyword id="KW-0597">Phosphoprotein</keyword>
<keyword id="KW-0645">Protease</keyword>
<keyword id="KW-0688">Ribosomal frameshifting</keyword>
<keyword id="KW-0694">RNA-binding</keyword>
<keyword id="KW-0696">RNA-directed RNA polymerase</keyword>
<keyword id="KW-0949">S-adenosyl-L-methionine</keyword>
<keyword id="KW-0964">Secreted</keyword>
<keyword id="KW-0720">Serine protease</keyword>
<keyword id="KW-0941">Suppressor of RNA silencing</keyword>
<keyword id="KW-0804">Transcription</keyword>
<keyword id="KW-0805">Transcription regulation</keyword>
<keyword id="KW-0808">Transferase</keyword>
<keyword id="KW-0812">Transmembrane</keyword>
<keyword id="KW-1133">Transmembrane helix</keyword>
<keyword id="KW-1161">Viral attachment to host cell</keyword>
<keyword id="KW-0261">Viral envelope protein</keyword>
<keyword id="KW-0899">Viral immunoevasion</keyword>
<keyword id="KW-1162">Viral penetration into host cytoplasm</keyword>
<keyword id="KW-0693">Viral RNA replication</keyword>
<keyword id="KW-0946">Virion</keyword>
<keyword id="KW-1164">Virus endocytosis by host</keyword>
<keyword id="KW-1160">Virus entry into host cell</keyword>
<keyword id="KW-0862">Zinc</keyword>
<sequence length="3432" mass="380166">MTKKPGGPGKNRAINMLKRGLPRVFPLVGVKRVVMSLLDGRGPVRFVLALITFFKFTALAPTKALLGRWKAVEKSVAMKHLTSFKRELGTLIDAVNKRGRKQNKRGGNEGSIMWLASLAVVIAYAGAMKLSNFQGKLLMTINNTDIADVIVIPTSKGENRCWVRAIDVGYMCEDTITYECPKLTMGNDPEDVDCWCDNQEVYVQYGRCTRTRHSKRSRRSVSVQTHGESSLVNKKEAWLDSTKATRYLMKTENWIIRNPGYAFLAATLGWMLGSNNGQRVVFTILLLLVAPAYSFNCLGMGNRDFIEGASGATWVDLVLEGDSCLTIMANDKPTLDVRMINIEASQLAEVRSYCYHASVTDISTVARCPTTGEAHNEKRADSSYVCKQGFTDRGWGNGCGLFGKGSIDTCAKFSCTSKAIGRTIQPENIKYEVGIFVHGTTTSENHGNYSAQVGASQAAKFTITPNAPSITLKLGDYGEVTLDCEPRSGLNTEAFYVMTVGSKSFLVHREWFHDLALPWTSPSSTAWRNRELLMEFEEAHATKQSVVALGSQEGGLHQALAGAIVVEYSSSVKLTSGHLKCRLKMDKLALKGTTYGMCTEKFSFAKNPADTGHGTVVIELSYSGSDGPCKIPIVSVASLNDMTPVGRLVTVNPFVATSSANSKVLVEMEPPFGDSYIVVGRGDKQINHHWHKAGSTLGKAFSTTLKGAQRLAALGDTAWDFGSIGGVFNSIGKAVHQVFGGAFRTLFGGMSWITQGLMGALLLWMGVNARDRSIALAFLATGGVLVFLATNVHADTGCAIDITRKEMRCGSGIFVHNDVEAWVDRYKYLPETPRSLAKIVHKAHKEGVCGVRSVTRLEHQMWEAVRDELNVLLKENAVDLSVVVNKPVGRYRSAPKRLSMTQEKFEMGWKAWGKSILFAPELANSTFVVDGPETKECPDEHRAWNSMQIEDFGFGITSTRVWLKIREESTDECDGAIIGTAVKGHVAVHSDLSYWIESRYNDTWKLERAVFGEVKSCTWPETHTLWGDGVEESELIIPHTIAGPKSKHNRREGYKTQNQGPWDENGIVLDFDYCPGTKVTITEDCGKRGPSVRTTTDSGKLITDWCCRSCSLPPLRFRTENGCWYGMEIRPVRHDETTLVRSQVDAFNGEMVDPFQLGLLVMFLATQEVLRKRWTARLTIPAVLGALLVLMLGGITYTDLARYVVLVAAAFAEANSGGDVLHLALIAVFKIQPAFLVMNMLSTRWTNQENVVLVLGAALFQLASVDLQIGVHGILNAAAIAWMIVRAITFPTTSSVTMPVLALLTPGMRALYLDTYRIILLVIGICSLLQERKKTMAKKKGAVLLGLALTSTGWFSPTTIAAGLMVCNPNKKRGWPATEFLSAVGLMFAIVGGLAELDIESMSIPFMLAGLMAVSYVVSGKATDMWLERAADISWEMDAAITGSSRRLDVKLDDDGDFHLIDDPGVPWKVWVLRMSCIGLAALTPWAIVPAAFGYWLTLKTTKRGGVFWDTPSPKPCSKGDTTTGVYRIMARGILGTYQAGVGVMYENVFHTLWHTTRGAAIMSGEGKLTPYWGSVKEDRIAYGGPWRFDRKWNGTDDVQVIVVEPGKAAVNIQTKPGVFRTPFGEVGAVSLDYPRGTSGSPILDSNGDIIGLYGNGVELGDGSYVSAIVQGDRQEEPVPEAYTPNMLRKRQMTVLDLHPGSGKTRKILPQIIKDAIQQRLRTAVLAPTRVVAAEMAEALRGLPVRYQTSAVQREHQGNEIVDVMCHATLTHRLMSPNRVPNYNLFVMDEAHFTDPASIAARGYIATKVELGEAAAIFMTATPPGTTDPFPDSNAPIHDLQDEIPDRAWSSGYEWITEYAGKTVWFVASVKMGNEIAMCLQRAGKKVIQLNRKSYDTEYPKCKNGDWDFVITTDISEMGANFGASRVIDCRKSVKPTILEEGEGRVILGNPSPITSASAAQRRGRVGRNPNQVGDEYHYGGATSEDDSNLAHWTEAKIMLDNIHMPNGLVAQLYGPEREKAFTMDGEYRLRGEEKKNFLELLRTADLPVWLAYKVASNGIQYTDRRWCFDGPRTNAILEDNTEVEIVTRMGERKILKPRWLDARVYADHQALKWFKDFAAGKRSAISFIEVLGRMPEHFMGKTREALDTMYLVATAEKGGKAHRMALEELPDALETITLIVAITVMTGGFFLLMMQRKGIGKMGLGALVLTLATFFLWAAEVPGTKIAGTLLIALLLMVVLIPEPEKQRSQTDNQLAVFLICVLTVVGVVAANEYGMLEKTKADLKSMFVGKTQASGLTGLPSMALDLRPATAWALYGGSTVVLTPLLKHLITSEYVTTSLASINSQAGSLFVLPRGVPFTDLDLTVGLVFLGCWGQITLTTFLTAMVLATLHYGYMLPGWQAEALRAAQRRTAAGIMKNAVVDGMVATDVPELERTTPLMQKKVGQVLLIGVSVAAFLVNPNVTTVREAGVLVTAATLTLWDNGASAVWNSTTATGLCHVMRGSYLAGGSIAWTLIKNADKPSLKRGRPGGRTLGEQWKEKLNAMSREEFFKYRREAIIEVDRTEARRARRENNIVGGHPVSRGSAKLRWLVEKGFVSPIGKVIDLGCGRGGWSYYAATLKKVQEVRGYTKGGAGHEEPMLMQSYGRNLVSLKSGVDVFYKPSEPSDTLFCDIGESSPSPEVEEQRTLRVLEMTSDWLHRGPREFCIKVLCPYMPKVIEKMEVLQRRFGGGLVRLPLSRNSNHEMYWVSGAAGNVVHAVNMTSQVLLGRMDRTVWRGPKYEEDVNLGSGTRAVGKGEVHSNQEKIKKRIQKLKEEFATTWHKDPEHPYRTWTYHGSYEVKATGSASSLVNGVVKLMSKPWDAIANVTTMAMTDTTPFGQQRVFKEKVDTKAPEPPAGAKEVLNETTNWLWAHLSREKRPRLCTKEEFIKKVNSNAALGAVFAEQNQWSTAREAVDDPRFWEMVDEERENHLRGECHTCIYNMMGKREKKPGEFGKAKGSRAIWFMWLGARYLEFEALGFLNEDHWLSRENSGGGVEGSGVQKLGYILRDIAGKQGGKMYADDTAGWDTRITRTDLENEAKVLELLDGEHRMLARAIIELTYRHKVVKVMRPAAEGKTVMDVISREDQRGSGQVVTYALNTFTNIAVQLVRLMEAEGVIGPQHLEQLPRKTKIAVRTWLFENGEERVTRMAISGDDCVVKPLDDRFATALHFLNAMSKVRKDIQEWKPSHGWHDWQQVPFCSNHFQEIVMKDGRSIVVPCRGQDELIGRARISPGAGWNVKDTACLAKAYAQMWLLLYFHRRDLRLMANAICSAVPVDWVPTGRTSWSIHSKGEWMTTEDMLQVWNRVWIEENEWMMDKTPITSWTDVPYVGKREDIWCGSLIGTRSRATWAENIYAAINQVRAVIGKENYVDYMTSLRRYEDVLIQEDRVI</sequence>
<organismHost>
    <name type="scientific">Ardeidae</name>
    <name type="common">herons</name>
    <dbReference type="NCBI Taxonomy" id="8899"/>
</organismHost>
<organismHost>
    <name type="scientific">Bos taurus</name>
    <name type="common">Bovine</name>
    <dbReference type="NCBI Taxonomy" id="9913"/>
</organismHost>
<organismHost>
    <name type="scientific">Culex gelidus</name>
    <dbReference type="NCBI Taxonomy" id="308713"/>
</organismHost>
<organismHost>
    <name type="scientific">Culex tritaeniorhynchus</name>
    <name type="common">Mosquito</name>
    <dbReference type="NCBI Taxonomy" id="7178"/>
</organismHost>
<organismHost>
    <name type="scientific">Equus caballus</name>
    <name type="common">Horse</name>
    <dbReference type="NCBI Taxonomy" id="9796"/>
</organismHost>
<organismHost>
    <name type="scientific">Homo sapiens</name>
    <name type="common">Human</name>
    <dbReference type="NCBI Taxonomy" id="9606"/>
</organismHost>
<organismHost>
    <name type="scientific">Sus scrofa</name>
    <name type="common">Pig</name>
    <dbReference type="NCBI Taxonomy" id="9823"/>
</organismHost>
<organism>
    <name type="scientific">Japanese encephalitis virus (strain Jaoars982)</name>
    <name type="common">JEV</name>
    <dbReference type="NCBI Taxonomy" id="11075"/>
    <lineage>
        <taxon>Viruses</taxon>
        <taxon>Riboviria</taxon>
        <taxon>Orthornavirae</taxon>
        <taxon>Kitrinoviricota</taxon>
        <taxon>Flasuviricetes</taxon>
        <taxon>Amarillovirales</taxon>
        <taxon>Flaviviridae</taxon>
        <taxon>Orthoflavivirus</taxon>
        <taxon>Orthoflavivirus japonicum</taxon>
    </lineage>
</organism>
<protein>
    <recommendedName>
        <fullName>Genome polyprotein</fullName>
    </recommendedName>
    <component>
        <recommendedName>
            <fullName>Capsid protein C</fullName>
        </recommendedName>
        <alternativeName>
            <fullName>Core protein</fullName>
        </alternativeName>
    </component>
    <component>
        <recommendedName>
            <fullName>Protein prM</fullName>
        </recommendedName>
    </component>
    <component>
        <recommendedName>
            <fullName>Peptide pr</fullName>
        </recommendedName>
    </component>
    <component>
        <recommendedName>
            <fullName>Small envelope protein M</fullName>
        </recommendedName>
        <alternativeName>
            <fullName>Matrix protein</fullName>
        </alternativeName>
    </component>
    <component>
        <recommendedName>
            <fullName>Envelope protein E</fullName>
        </recommendedName>
    </component>
    <component>
        <recommendedName>
            <fullName>Non-structural protein 1</fullName>
            <shortName>NS1</shortName>
        </recommendedName>
    </component>
    <component>
        <recommendedName>
            <fullName>Non-structural protein 2A</fullName>
            <shortName>NS2A</shortName>
        </recommendedName>
    </component>
    <component>
        <recommendedName>
            <fullName>Serine protease subunit NS2B</fullName>
        </recommendedName>
        <alternativeName>
            <fullName>Flavivirin protease NS2B regulatory subunit</fullName>
        </alternativeName>
        <alternativeName>
            <fullName>Non-structural protein 2B</fullName>
        </alternativeName>
    </component>
    <component>
        <recommendedName>
            <fullName>Serine protease NS3</fullName>
            <ecNumber evidence="7">3.4.21.91</ecNumber>
            <ecNumber evidence="7">3.6.1.15</ecNumber>
            <ecNumber evidence="7">3.6.4.13</ecNumber>
        </recommendedName>
        <alternativeName>
            <fullName>Flavivirin protease NS3 catalytic subunit</fullName>
        </alternativeName>
        <alternativeName>
            <fullName>Non-structural protein 3</fullName>
        </alternativeName>
    </component>
    <component>
        <recommendedName>
            <fullName>Non-structural protein 4A</fullName>
            <shortName>NS4A</shortName>
        </recommendedName>
    </component>
    <component>
        <recommendedName>
            <fullName>Peptide 2k</fullName>
        </recommendedName>
    </component>
    <component>
        <recommendedName>
            <fullName>Non-structural protein 4B</fullName>
            <shortName>NS4B</shortName>
        </recommendedName>
    </component>
    <component>
        <recommendedName>
            <fullName>RNA-directed RNA polymerase NS5</fullName>
            <ecNumber evidence="18">2.1.1.56</ecNumber>
            <ecNumber evidence="18">2.1.1.57</ecNumber>
            <ecNumber evidence="13">2.7.7.48</ecNumber>
        </recommendedName>
        <alternativeName>
            <fullName>Non-structural protein 5</fullName>
        </alternativeName>
    </component>
</protein>
<feature type="chain" id="PRO_0000405196" description="Genome polyprotein">
    <location>
        <begin position="1"/>
        <end position="3432"/>
    </location>
</feature>
<feature type="chain" id="PRO_0000037858" description="Capsid protein C">
    <location>
        <begin position="1"/>
        <end position="105"/>
    </location>
</feature>
<feature type="propeptide" id="PRO_0000405197" description="ER anchor for the capsid protein C, removed in mature form by serine protease NS3">
    <location>
        <begin position="106"/>
        <end position="127"/>
    </location>
</feature>
<feature type="chain" id="PRO_0000405198" description="Protein prM">
    <location>
        <begin position="128"/>
        <end position="294"/>
    </location>
</feature>
<feature type="chain" id="PRO_0000037859" description="Peptide pr">
    <location>
        <begin position="128"/>
        <end position="219"/>
    </location>
</feature>
<feature type="chain" id="PRO_0000037860" description="Small envelope protein M">
    <location>
        <begin position="220"/>
        <end position="294"/>
    </location>
</feature>
<feature type="chain" id="PRO_0000037861" description="Envelope protein E">
    <location>
        <begin position="295"/>
        <end position="794"/>
    </location>
</feature>
<feature type="chain" id="PRO_0000037862" description="Non-structural protein 1">
    <location>
        <begin position="795"/>
        <end position="1146"/>
    </location>
</feature>
<feature type="chain" id="PRO_0000037863" description="Non-structural protein 2A">
    <location>
        <begin position="1147"/>
        <end position="1373"/>
    </location>
</feature>
<feature type="chain" id="PRO_0000037864" description="Serine protease subunit NS2B">
    <location>
        <begin position="1374"/>
        <end position="1504"/>
    </location>
</feature>
<feature type="chain" id="PRO_0000037865" description="Serine protease NS3">
    <location>
        <begin position="1505"/>
        <end position="2123"/>
    </location>
</feature>
<feature type="chain" id="PRO_0000037866" description="Non-structural protein 4A">
    <location>
        <begin position="2124"/>
        <end position="2249"/>
    </location>
</feature>
<feature type="peptide" id="PRO_0000405199" description="Peptide 2k">
    <location>
        <begin position="2250"/>
        <end position="2272"/>
    </location>
</feature>
<feature type="chain" id="PRO_0000037867" description="Non-structural protein 4B">
    <location>
        <begin position="2273"/>
        <end position="2527"/>
    </location>
</feature>
<feature type="chain" id="PRO_0000037868" description="RNA-directed RNA polymerase NS5">
    <location>
        <begin position="2528"/>
        <end position="3432"/>
    </location>
</feature>
<feature type="topological domain" description="Cytoplasmic" evidence="12">
    <location>
        <begin position="2"/>
        <end position="109"/>
    </location>
</feature>
<feature type="transmembrane region" description="Helical" evidence="12">
    <location>
        <begin position="110"/>
        <end position="130"/>
    </location>
</feature>
<feature type="topological domain" description="Extracellular" evidence="12">
    <location>
        <begin position="131"/>
        <end position="253"/>
    </location>
</feature>
<feature type="transmembrane region" description="Helical" evidence="12">
    <location>
        <begin position="254"/>
        <end position="274"/>
    </location>
</feature>
<feature type="topological domain" description="Cytoplasmic" evidence="12">
    <location>
        <begin position="275"/>
        <end position="279"/>
    </location>
</feature>
<feature type="transmembrane region" description="Helical" evidence="20">
    <location>
        <begin position="280"/>
        <end position="294"/>
    </location>
</feature>
<feature type="topological domain" description="Extracellular" evidence="12">
    <location>
        <begin position="295"/>
        <end position="746"/>
    </location>
</feature>
<feature type="transmembrane region" description="Helical" evidence="12">
    <location>
        <begin position="747"/>
        <end position="767"/>
    </location>
</feature>
<feature type="topological domain" description="Cytoplasmic" evidence="12">
    <location>
        <begin position="768"/>
        <end position="773"/>
    </location>
</feature>
<feature type="transmembrane region" description="Helical" evidence="12">
    <location>
        <begin position="774"/>
        <end position="794"/>
    </location>
</feature>
<feature type="topological domain" description="Extracellular" evidence="12">
    <location>
        <begin position="795"/>
        <end position="1219"/>
    </location>
</feature>
<feature type="transmembrane region" description="Helical" evidence="12">
    <location>
        <begin position="1220"/>
        <end position="1240"/>
    </location>
</feature>
<feature type="topological domain" description="Cytoplasmic" evidence="12">
    <location>
        <begin position="1241"/>
        <end position="1250"/>
    </location>
</feature>
<feature type="transmembrane region" description="Helical" evidence="12">
    <location>
        <begin position="1251"/>
        <end position="1271"/>
    </location>
</feature>
<feature type="topological domain" description="Lumenal" evidence="12">
    <location>
        <position position="1272"/>
    </location>
</feature>
<feature type="transmembrane region" description="Helical" evidence="12">
    <location>
        <begin position="1273"/>
        <end position="1293"/>
    </location>
</feature>
<feature type="topological domain" description="Cytoplasmic" evidence="12">
    <location>
        <begin position="1294"/>
        <end position="1309"/>
    </location>
</feature>
<feature type="transmembrane region" description="Helical" evidence="12">
    <location>
        <begin position="1310"/>
        <end position="1330"/>
    </location>
</feature>
<feature type="topological domain" description="Lumenal" evidence="12">
    <location>
        <begin position="1331"/>
        <end position="1341"/>
    </location>
</feature>
<feature type="transmembrane region" description="Helical" evidence="12">
    <location>
        <begin position="1342"/>
        <end position="1362"/>
    </location>
</feature>
<feature type="topological domain" description="Cytoplasmic" evidence="12">
    <location>
        <begin position="1363"/>
        <end position="1374"/>
    </location>
</feature>
<feature type="transmembrane region" description="Helical" evidence="12">
    <location>
        <begin position="1375"/>
        <end position="1395"/>
    </location>
</feature>
<feature type="topological domain" description="Lumenal" evidence="12">
    <location>
        <begin position="1396"/>
        <end position="1398"/>
    </location>
</feature>
<feature type="transmembrane region" description="Helical" evidence="12">
    <location>
        <begin position="1399"/>
        <end position="1419"/>
    </location>
</feature>
<feature type="topological domain" description="Cytoplasmic" evidence="12">
    <location>
        <begin position="1420"/>
        <end position="1476"/>
    </location>
</feature>
<feature type="intramembrane region" description="Helical" evidence="12">
    <location>
        <begin position="1477"/>
        <end position="1497"/>
    </location>
</feature>
<feature type="topological domain" description="Cytoplasmic" evidence="12">
    <location>
        <begin position="1498"/>
        <end position="2173"/>
    </location>
</feature>
<feature type="transmembrane region" description="Helical" evidence="12">
    <location>
        <begin position="2174"/>
        <end position="2194"/>
    </location>
</feature>
<feature type="topological domain" description="Lumenal" evidence="12">
    <location>
        <begin position="2195"/>
        <end position="2199"/>
    </location>
</feature>
<feature type="intramembrane region" description="Helical" evidence="12">
    <location>
        <begin position="2200"/>
        <end position="2220"/>
    </location>
</feature>
<feature type="topological domain" description="Lumenal" evidence="12">
    <location>
        <position position="2221"/>
    </location>
</feature>
<feature type="transmembrane region" description="Helical" evidence="12">
    <location>
        <begin position="2222"/>
        <end position="2242"/>
    </location>
</feature>
<feature type="topological domain" description="Cytoplasmic" evidence="12">
    <location>
        <begin position="2243"/>
        <end position="2257"/>
    </location>
</feature>
<feature type="transmembrane region" description="Helical; Note=Signal for NS4B" evidence="12">
    <location>
        <begin position="2258"/>
        <end position="2278"/>
    </location>
</feature>
<feature type="topological domain" description="Lumenal" evidence="12">
    <location>
        <begin position="2279"/>
        <end position="2311"/>
    </location>
</feature>
<feature type="intramembrane region" description="Helical" evidence="12">
    <location>
        <begin position="2312"/>
        <end position="2332"/>
    </location>
</feature>
<feature type="topological domain" description="Lumenal" evidence="12">
    <location>
        <begin position="2333"/>
        <end position="2368"/>
    </location>
</feature>
<feature type="transmembrane region" description="Helical" evidence="12">
    <location>
        <begin position="2369"/>
        <end position="2389"/>
    </location>
</feature>
<feature type="topological domain" description="Cytoplasmic" evidence="12">
    <location>
        <begin position="2390"/>
        <end position="2444"/>
    </location>
</feature>
<feature type="transmembrane region" description="Helical" evidence="12">
    <location>
        <begin position="2445"/>
        <end position="2465"/>
    </location>
</feature>
<feature type="topological domain" description="Lumenal" evidence="12">
    <location>
        <begin position="2466"/>
        <end position="2469"/>
    </location>
</feature>
<feature type="transmembrane region" description="Helical" evidence="12">
    <location>
        <begin position="2470"/>
        <end position="2490"/>
    </location>
</feature>
<feature type="topological domain" description="Cytoplasmic" evidence="12">
    <location>
        <begin position="2491"/>
        <end position="3432"/>
    </location>
</feature>
<feature type="domain" description="Peptidase S7" evidence="17">
    <location>
        <begin position="1505"/>
        <end position="1682"/>
    </location>
</feature>
<feature type="domain" description="Helicase ATP-binding" evidence="14">
    <location>
        <begin position="1685"/>
        <end position="1841"/>
    </location>
</feature>
<feature type="domain" description="Helicase C-terminal" evidence="15">
    <location>
        <begin position="1852"/>
        <end position="2017"/>
    </location>
</feature>
<feature type="domain" description="mRNA cap 0-1 NS5-type MT" evidence="18">
    <location>
        <begin position="2528"/>
        <end position="2793"/>
    </location>
</feature>
<feature type="domain" description="RdRp catalytic" evidence="13">
    <location>
        <begin position="3057"/>
        <end position="3209"/>
    </location>
</feature>
<feature type="region of interest" description="Interaction with host EXOC1" evidence="2">
    <location>
        <begin position="2"/>
        <end position="15"/>
    </location>
</feature>
<feature type="region of interest" description="Hydrophobic; homodimerization of capsid protein C" evidence="8">
    <location>
        <begin position="37"/>
        <end position="72"/>
    </location>
</feature>
<feature type="region of interest" description="Fusion peptide" evidence="4">
    <location>
        <begin position="392"/>
        <end position="405"/>
    </location>
</feature>
<feature type="region of interest" description="Interacts with and activates NS3 protease" evidence="16">
    <location>
        <begin position="1427"/>
        <end position="1466"/>
    </location>
</feature>
<feature type="region of interest" description="Important for RNA-binding" evidence="5">
    <location>
        <begin position="1689"/>
        <end position="1692"/>
    </location>
</feature>
<feature type="region of interest" description="Disordered" evidence="19">
    <location>
        <begin position="1950"/>
        <end position="1971"/>
    </location>
</feature>
<feature type="region of interest" description="Regulates the ATPase activity of NS3 helicase" evidence="11">
    <location>
        <begin position="2168"/>
        <end position="2172"/>
    </location>
</feature>
<feature type="short sequence motif" description="DEAH box" evidence="14">
    <location>
        <begin position="1789"/>
        <end position="1792"/>
    </location>
</feature>
<feature type="active site" description="Charge relay system; for serine protease NS3 activity" evidence="17">
    <location>
        <position position="1555"/>
    </location>
</feature>
<feature type="active site" description="Charge relay system; for serine protease NS3 activity" evidence="17">
    <location>
        <position position="1579"/>
    </location>
</feature>
<feature type="active site" description="Charge relay system; for serine protease NS3 activity" evidence="17">
    <location>
        <position position="1639"/>
    </location>
</feature>
<feature type="active site" description="For 2'-O-MTase activity" evidence="10">
    <location>
        <position position="2588"/>
    </location>
</feature>
<feature type="active site" description="For 2'-O-MTase activity" evidence="10">
    <location>
        <position position="2673"/>
    </location>
</feature>
<feature type="active site" description="For 2'-O-MTase activity" evidence="10">
    <location>
        <position position="2709"/>
    </location>
</feature>
<feature type="active site" description="For 2'-O-MTase activity" evidence="10">
    <location>
        <position position="2745"/>
    </location>
</feature>
<feature type="binding site" evidence="14">
    <location>
        <begin position="1698"/>
        <end position="1705"/>
    </location>
    <ligand>
        <name>ATP</name>
        <dbReference type="ChEBI" id="CHEBI:30616"/>
    </ligand>
</feature>
<feature type="binding site" evidence="18">
    <location>
        <position position="2583"/>
    </location>
    <ligand>
        <name>S-adenosyl-L-methionine</name>
        <dbReference type="ChEBI" id="CHEBI:59789"/>
    </ligand>
</feature>
<feature type="binding site" evidence="18">
    <location>
        <position position="2613"/>
    </location>
    <ligand>
        <name>S-adenosyl-L-methionine</name>
        <dbReference type="ChEBI" id="CHEBI:59789"/>
    </ligand>
</feature>
<feature type="binding site" evidence="18">
    <location>
        <position position="2614"/>
    </location>
    <ligand>
        <name>S-adenosyl-L-methionine</name>
        <dbReference type="ChEBI" id="CHEBI:59789"/>
    </ligand>
</feature>
<feature type="binding site" evidence="18">
    <location>
        <position position="2631"/>
    </location>
    <ligand>
        <name>S-adenosyl-L-methionine</name>
        <dbReference type="ChEBI" id="CHEBI:59789"/>
    </ligand>
</feature>
<feature type="binding site" evidence="18">
    <location>
        <position position="2632"/>
    </location>
    <ligand>
        <name>S-adenosyl-L-methionine</name>
        <dbReference type="ChEBI" id="CHEBI:59789"/>
    </ligand>
</feature>
<feature type="binding site" evidence="18">
    <location>
        <position position="2658"/>
    </location>
    <ligand>
        <name>S-adenosyl-L-methionine</name>
        <dbReference type="ChEBI" id="CHEBI:59789"/>
    </ligand>
</feature>
<feature type="binding site" evidence="18">
    <location>
        <position position="2659"/>
    </location>
    <ligand>
        <name>S-adenosyl-L-methionine</name>
        <dbReference type="ChEBI" id="CHEBI:59789"/>
    </ligand>
</feature>
<feature type="binding site" evidence="18">
    <location>
        <position position="2674"/>
    </location>
    <ligand>
        <name>S-adenosyl-L-methionine</name>
        <dbReference type="ChEBI" id="CHEBI:59789"/>
    </ligand>
</feature>
<feature type="binding site" evidence="18">
    <location>
        <position position="2747"/>
    </location>
    <ligand>
        <name>S-adenosyl-L-methionine</name>
        <dbReference type="ChEBI" id="CHEBI:59789"/>
    </ligand>
</feature>
<feature type="binding site" evidence="3">
    <location>
        <position position="2967"/>
    </location>
    <ligand>
        <name>Zn(2+)</name>
        <dbReference type="ChEBI" id="CHEBI:29105"/>
        <label>1</label>
    </ligand>
</feature>
<feature type="binding site" evidence="3">
    <location>
        <position position="2971"/>
    </location>
    <ligand>
        <name>Zn(2+)</name>
        <dbReference type="ChEBI" id="CHEBI:29105"/>
        <label>1</label>
    </ligand>
</feature>
<feature type="binding site" evidence="3">
    <location>
        <position position="2976"/>
    </location>
    <ligand>
        <name>Zn(2+)</name>
        <dbReference type="ChEBI" id="CHEBI:29105"/>
        <label>1</label>
    </ligand>
</feature>
<feature type="binding site" evidence="3">
    <location>
        <position position="2979"/>
    </location>
    <ligand>
        <name>Zn(2+)</name>
        <dbReference type="ChEBI" id="CHEBI:29105"/>
        <label>1</label>
    </ligand>
</feature>
<feature type="binding site" evidence="3">
    <location>
        <position position="3244"/>
    </location>
    <ligand>
        <name>Zn(2+)</name>
        <dbReference type="ChEBI" id="CHEBI:29105"/>
        <label>2</label>
    </ligand>
</feature>
<feature type="binding site" evidence="3">
    <location>
        <position position="3260"/>
    </location>
    <ligand>
        <name>Zn(2+)</name>
        <dbReference type="ChEBI" id="CHEBI:29105"/>
        <label>2</label>
    </ligand>
</feature>
<feature type="binding site" evidence="3">
    <location>
        <position position="3379"/>
    </location>
    <ligand>
        <name>Zn(2+)</name>
        <dbReference type="ChEBI" id="CHEBI:29105"/>
        <label>2</label>
    </ligand>
</feature>
<feature type="site" description="Cleavage; by viral protease NS3" evidence="2">
    <location>
        <begin position="105"/>
        <end position="106"/>
    </location>
</feature>
<feature type="site" description="Cleavage; by host signal peptidase" evidence="2">
    <location>
        <begin position="127"/>
        <end position="128"/>
    </location>
</feature>
<feature type="site" description="Cleavage; by host furin" evidence="2">
    <location>
        <begin position="219"/>
        <end position="220"/>
    </location>
</feature>
<feature type="site" description="Cleavage; by host signal peptidase" evidence="2">
    <location>
        <begin position="294"/>
        <end position="295"/>
    </location>
</feature>
<feature type="site" description="Cleavage; by host signal peptidase" evidence="2">
    <location>
        <begin position="794"/>
        <end position="795"/>
    </location>
</feature>
<feature type="site" description="Cleavage; by host" evidence="2">
    <location>
        <begin position="1146"/>
        <end position="1147"/>
    </location>
</feature>
<feature type="site" description="Cleavage; by viral protease NS3" evidence="2">
    <location>
        <begin position="1373"/>
        <end position="1374"/>
    </location>
</feature>
<feature type="site" description="Cleavage; by autolysis" evidence="2">
    <location>
        <begin position="1504"/>
        <end position="1505"/>
    </location>
</feature>
<feature type="site" description="Involved in NS3 ATPase and RTPase activities" evidence="3">
    <location>
        <position position="1962"/>
    </location>
</feature>
<feature type="site" description="Involved in NS3 ATPase and RTPase activities" evidence="3">
    <location>
        <position position="1965"/>
    </location>
</feature>
<feature type="site" description="Cleavage; by autolysis" evidence="2">
    <location>
        <begin position="2123"/>
        <end position="2124"/>
    </location>
</feature>
<feature type="site" description="Cleavage; by viral protease NS3" evidence="2">
    <location>
        <begin position="2249"/>
        <end position="2250"/>
    </location>
</feature>
<feature type="site" description="Cleavage; by host signal peptidase" evidence="2">
    <location>
        <begin position="2272"/>
        <end position="2273"/>
    </location>
</feature>
<feature type="site" description="Cleavage; by viral protease NS3" evidence="2">
    <location>
        <begin position="2527"/>
        <end position="2528"/>
    </location>
</feature>
<feature type="site" description="mRNA cap binding" evidence="18">
    <location>
        <position position="2540"/>
    </location>
</feature>
<feature type="site" description="mRNA cap binding; via carbonyl oxygen" evidence="18">
    <location>
        <position position="2543"/>
    </location>
</feature>
<feature type="site" description="mRNA cap binding" evidence="18">
    <location>
        <position position="2544"/>
    </location>
</feature>
<feature type="site" description="mRNA cap binding; via carbonyl oxygen" evidence="18">
    <location>
        <position position="2546"/>
    </location>
</feature>
<feature type="site" description="mRNA cap binding" evidence="18">
    <location>
        <position position="2551"/>
    </location>
</feature>
<feature type="site" description="mRNA cap binding" evidence="18">
    <location>
        <position position="2555"/>
    </location>
</feature>
<feature type="site" description="Essential for 2'-O-methyltransferase activity" evidence="18">
    <location>
        <position position="2588"/>
    </location>
</feature>
<feature type="site" description="Essential for 2'-O-methyltransferase and N-7 methyltransferase activity" evidence="18">
    <location>
        <position position="2673"/>
    </location>
</feature>
<feature type="site" description="mRNA cap binding" evidence="18">
    <location>
        <position position="2677"/>
    </location>
</feature>
<feature type="site" description="Essential for 2'-O-methyltransferase activity" evidence="18">
    <location>
        <position position="2709"/>
    </location>
</feature>
<feature type="site" description="mRNA cap binding" evidence="18">
    <location>
        <position position="2740"/>
    </location>
</feature>
<feature type="site" description="mRNA cap binding" evidence="18">
    <location>
        <position position="2742"/>
    </location>
</feature>
<feature type="site" description="Essential for 2'-O-methyltransferase activity" evidence="18">
    <location>
        <position position="2745"/>
    </location>
</feature>
<feature type="modified residue" description="N6-acetyllysine; by host" evidence="9">
    <location>
        <position position="1893"/>
    </location>
</feature>
<feature type="modified residue" description="Phosphoserine" evidence="1">
    <location>
        <position position="2583"/>
    </location>
</feature>
<feature type="glycosylation site" description="N-linked (GlcNAc...) asparagine; by host" evidence="3">
    <location>
        <position position="142"/>
    </location>
</feature>
<feature type="glycosylation site" description="N-linked (GlcNAc...) asparagine; by host" evidence="12">
    <location>
        <position position="448"/>
    </location>
</feature>
<feature type="glycosylation site" description="N-linked (GlcNAc...) asparagine; by host" evidence="11">
    <location>
        <position position="924"/>
    </location>
</feature>
<feature type="glycosylation site" description="N-linked (GlcNAc...) asparagine; by host" evidence="11">
    <location>
        <position position="1001"/>
    </location>
</feature>
<feature type="disulfide bond" evidence="11">
    <location>
        <begin position="297"/>
        <end position="324"/>
    </location>
</feature>
<feature type="disulfide bond" evidence="11">
    <location>
        <begin position="354"/>
        <end position="415"/>
    </location>
</feature>
<feature type="disulfide bond" evidence="2">
    <location>
        <begin position="354"/>
        <end position="410"/>
    </location>
</feature>
<feature type="disulfide bond" evidence="11">
    <location>
        <begin position="368"/>
        <end position="399"/>
    </location>
</feature>
<feature type="disulfide bond" evidence="2">
    <location>
        <begin position="386"/>
        <end position="415"/>
    </location>
</feature>
<feature type="disulfide bond" evidence="11">
    <location>
        <begin position="386"/>
        <end position="410"/>
    </location>
</feature>
<feature type="disulfide bond" evidence="11">
    <location>
        <begin position="484"/>
        <end position="581"/>
    </location>
</feature>
<feature type="disulfide bond" evidence="11">
    <location>
        <begin position="598"/>
        <end position="629"/>
    </location>
</feature>
<feature type="disulfide bond" evidence="11">
    <location>
        <begin position="798"/>
        <end position="809"/>
    </location>
</feature>
<feature type="disulfide bond" evidence="11">
    <location>
        <begin position="849"/>
        <end position="937"/>
    </location>
</feature>
<feature type="disulfide bond" evidence="11">
    <location>
        <begin position="973"/>
        <end position="1017"/>
    </location>
</feature>
<feature type="disulfide bond" evidence="11">
    <location>
        <begin position="1074"/>
        <end position="1123"/>
    </location>
</feature>
<feature type="disulfide bond" evidence="11">
    <location>
        <begin position="1085"/>
        <end position="1106"/>
    </location>
</feature>
<feature type="disulfide bond" evidence="11">
    <location>
        <begin position="1107"/>
        <end position="1110"/>
    </location>
</feature>
<proteinExistence type="evidence at protein level"/>
<accession>P32886</accession>
<accession>P08769</accession>
<reference key="1">
    <citation type="journal article" date="1987" name="Virology">
        <title>Complete nucleotide sequence of the Japanese encephalitis virus genome RNA.</title>
        <authorList>
            <person name="Sumiyoshi H."/>
            <person name="Mori C."/>
            <person name="Fuke I."/>
            <person name="Morita K."/>
            <person name="Kuhara S."/>
            <person name="Kondou J."/>
            <person name="Kikuchi Y."/>
            <person name="Nagamatu H."/>
            <person name="Igarashi A."/>
        </authorList>
    </citation>
    <scope>NUCLEOTIDE SEQUENCE [GENOMIC RNA]</scope>
</reference>
<reference key="2">
    <citation type="journal article" date="1986" name="Gene">
        <title>Sequence of 3000 nucleotides at the 5' end of Japanese encephalitis virus RNA.</title>
        <authorList>
            <person name="Sumiyoshi H."/>
            <person name="Morita K."/>
            <person name="Mori C."/>
            <person name="Fuke I."/>
            <person name="Shiba T."/>
            <person name="Sakaki Y."/>
            <person name="Igarashi A."/>
        </authorList>
    </citation>
    <scope>NUCLEOTIDE SEQUENCE [GENOMIC RNA] OF 1-969</scope>
</reference>
<reference key="3">
    <citation type="journal article" date="1989" name="Virology">
        <title>Maturation of Japanese encephalitis virus glycoproteins produced by infected mammalian and mosquito cells.</title>
        <authorList>
            <person name="Mason P.W."/>
        </authorList>
    </citation>
    <scope>ALTERNATIVE PRODUCT</scope>
</reference>
<reference key="4">
    <citation type="journal article" date="2009" name="Virol. J.">
        <title>A conserved predicted pseudoknot in the NS2A-encoding sequence of West Nile and Japanese encephalitis flaviviruses suggests NS1' may derive from ribosomal frameshifting.</title>
        <authorList>
            <person name="Firth A.E."/>
            <person name="Atkins J.F."/>
        </authorList>
    </citation>
    <scope>RIBOSOMAL FRAMESHIFTING</scope>
</reference>
<reference key="5">
    <citation type="journal article" date="2010" name="J. Virol.">
        <title>NS1' of flaviviruses in the Japanese encephalitis virus serogroup is a product of ribosomal frameshifting and plays a role in viral neuroinvasiveness.</title>
        <authorList>
            <person name="Melian E.B."/>
            <person name="Hinzman E."/>
            <person name="Nagasaki T."/>
            <person name="Firth A.E."/>
            <person name="Wills N.M."/>
            <person name="Nouwens A.S."/>
            <person name="Blitvich B.J."/>
            <person name="Leung J."/>
            <person name="Funk A."/>
            <person name="Atkins J.F."/>
            <person name="Hall R."/>
            <person name="Khromykh A.A."/>
        </authorList>
    </citation>
    <scope>RIBOSOMAL FRAMESHIFTING</scope>
</reference>
<name>POLG_JAEVJ</name>
<evidence type="ECO:0000250" key="1">
    <source>
        <dbReference type="UniProtKB" id="P03314"/>
    </source>
</evidence>
<evidence type="ECO:0000250" key="2">
    <source>
        <dbReference type="UniProtKB" id="P06935"/>
    </source>
</evidence>
<evidence type="ECO:0000250" key="3">
    <source>
        <dbReference type="UniProtKB" id="P14335"/>
    </source>
</evidence>
<evidence type="ECO:0000250" key="4">
    <source>
        <dbReference type="UniProtKB" id="P14336"/>
    </source>
</evidence>
<evidence type="ECO:0000250" key="5">
    <source>
        <dbReference type="UniProtKB" id="P14340"/>
    </source>
</evidence>
<evidence type="ECO:0000250" key="6">
    <source>
        <dbReference type="UniProtKB" id="P17763"/>
    </source>
</evidence>
<evidence type="ECO:0000250" key="7">
    <source>
        <dbReference type="UniProtKB" id="P27395"/>
    </source>
</evidence>
<evidence type="ECO:0000250" key="8">
    <source>
        <dbReference type="UniProtKB" id="P29990"/>
    </source>
</evidence>
<evidence type="ECO:0000250" key="9">
    <source>
        <dbReference type="UniProtKB" id="Q32ZE1"/>
    </source>
</evidence>
<evidence type="ECO:0000250" key="10">
    <source>
        <dbReference type="UniProtKB" id="Q6YMS4"/>
    </source>
</evidence>
<evidence type="ECO:0000250" key="11">
    <source>
        <dbReference type="UniProtKB" id="Q9Q6P4"/>
    </source>
</evidence>
<evidence type="ECO:0000255" key="12"/>
<evidence type="ECO:0000255" key="13">
    <source>
        <dbReference type="PROSITE-ProRule" id="PRU00539"/>
    </source>
</evidence>
<evidence type="ECO:0000255" key="14">
    <source>
        <dbReference type="PROSITE-ProRule" id="PRU00541"/>
    </source>
</evidence>
<evidence type="ECO:0000255" key="15">
    <source>
        <dbReference type="PROSITE-ProRule" id="PRU00542"/>
    </source>
</evidence>
<evidence type="ECO:0000255" key="16">
    <source>
        <dbReference type="PROSITE-ProRule" id="PRU00859"/>
    </source>
</evidence>
<evidence type="ECO:0000255" key="17">
    <source>
        <dbReference type="PROSITE-ProRule" id="PRU00860"/>
    </source>
</evidence>
<evidence type="ECO:0000255" key="18">
    <source>
        <dbReference type="PROSITE-ProRule" id="PRU00924"/>
    </source>
</evidence>
<evidence type="ECO:0000256" key="19">
    <source>
        <dbReference type="SAM" id="MobiDB-lite"/>
    </source>
</evidence>
<evidence type="ECO:0000305" key="20"/>
<dbReference type="EC" id="3.4.21.91" evidence="7"/>
<dbReference type="EC" id="3.6.1.15" evidence="7"/>
<dbReference type="EC" id="3.6.4.13" evidence="7"/>
<dbReference type="EC" id="2.1.1.56" evidence="18"/>
<dbReference type="EC" id="2.1.1.57" evidence="18"/>
<dbReference type="EC" id="2.7.7.48" evidence="13"/>
<dbReference type="EMBL" id="M15337">
    <property type="protein sequence ID" value="AAA46247.1"/>
    <property type="molecule type" value="Genomic_RNA"/>
</dbReference>
<dbReference type="EMBL" id="M18370">
    <property type="protein sequence ID" value="AAA81554.1"/>
    <property type="molecule type" value="Genomic_RNA"/>
</dbReference>
<dbReference type="PIR" id="A27403">
    <property type="entry name" value="GNWVJE"/>
</dbReference>
<dbReference type="RefSeq" id="NP_059434.1">
    <property type="nucleotide sequence ID" value="NC_001437.1"/>
</dbReference>
<dbReference type="PDB" id="5YWO">
    <property type="method" value="EM"/>
    <property type="resolution" value="4.70 A"/>
    <property type="chains" value="A/C/E=295-794"/>
</dbReference>
<dbReference type="PDB" id="5YWP">
    <property type="method" value="EM"/>
    <property type="resolution" value="4.60 A"/>
    <property type="chains" value="A/C/E=295-794"/>
</dbReference>
<dbReference type="PDBsum" id="5YWO"/>
<dbReference type="PDBsum" id="5YWP"/>
<dbReference type="SMR" id="P32886"/>
<dbReference type="MEROPS" id="S07.003"/>
<dbReference type="ABCD" id="P32886">
    <property type="antibodies" value="2 sequenced antibodies"/>
</dbReference>
<dbReference type="GeneID" id="1489713"/>
<dbReference type="KEGG" id="vg:1489713"/>
<dbReference type="Proteomes" id="UP000007214">
    <property type="component" value="Segment"/>
</dbReference>
<dbReference type="GO" id="GO:0005576">
    <property type="term" value="C:extracellular region"/>
    <property type="evidence" value="ECO:0007669"/>
    <property type="project" value="UniProtKB-SubCell"/>
</dbReference>
<dbReference type="GO" id="GO:0044167">
    <property type="term" value="C:host cell endoplasmic reticulum membrane"/>
    <property type="evidence" value="ECO:0007669"/>
    <property type="project" value="UniProtKB-SubCell"/>
</dbReference>
<dbReference type="GO" id="GO:0042025">
    <property type="term" value="C:host cell nucleus"/>
    <property type="evidence" value="ECO:0007669"/>
    <property type="project" value="UniProtKB-SubCell"/>
</dbReference>
<dbReference type="GO" id="GO:0044220">
    <property type="term" value="C:host cell perinuclear region of cytoplasm"/>
    <property type="evidence" value="ECO:0007669"/>
    <property type="project" value="UniProtKB-SubCell"/>
</dbReference>
<dbReference type="GO" id="GO:0044228">
    <property type="term" value="C:host cell surface"/>
    <property type="evidence" value="ECO:0007669"/>
    <property type="project" value="UniProtKB-SubCell"/>
</dbReference>
<dbReference type="GO" id="GO:0016020">
    <property type="term" value="C:membrane"/>
    <property type="evidence" value="ECO:0007669"/>
    <property type="project" value="UniProtKB-KW"/>
</dbReference>
<dbReference type="GO" id="GO:0019028">
    <property type="term" value="C:viral capsid"/>
    <property type="evidence" value="ECO:0007669"/>
    <property type="project" value="UniProtKB-KW"/>
</dbReference>
<dbReference type="GO" id="GO:0019031">
    <property type="term" value="C:viral envelope"/>
    <property type="evidence" value="ECO:0007669"/>
    <property type="project" value="UniProtKB-KW"/>
</dbReference>
<dbReference type="GO" id="GO:0055036">
    <property type="term" value="C:virion membrane"/>
    <property type="evidence" value="ECO:0007669"/>
    <property type="project" value="UniProtKB-SubCell"/>
</dbReference>
<dbReference type="GO" id="GO:0005524">
    <property type="term" value="F:ATP binding"/>
    <property type="evidence" value="ECO:0007669"/>
    <property type="project" value="UniProtKB-KW"/>
</dbReference>
<dbReference type="GO" id="GO:0016887">
    <property type="term" value="F:ATP hydrolysis activity"/>
    <property type="evidence" value="ECO:0007669"/>
    <property type="project" value="RHEA"/>
</dbReference>
<dbReference type="GO" id="GO:0003725">
    <property type="term" value="F:double-stranded RNA binding"/>
    <property type="evidence" value="ECO:0007669"/>
    <property type="project" value="InterPro"/>
</dbReference>
<dbReference type="GO" id="GO:0046872">
    <property type="term" value="F:metal ion binding"/>
    <property type="evidence" value="ECO:0007669"/>
    <property type="project" value="UniProtKB-KW"/>
</dbReference>
<dbReference type="GO" id="GO:0004483">
    <property type="term" value="F:mRNA (nucleoside-2'-O-)-methyltransferase activity"/>
    <property type="evidence" value="ECO:0007669"/>
    <property type="project" value="UniProtKB-EC"/>
</dbReference>
<dbReference type="GO" id="GO:0004482">
    <property type="term" value="F:mRNA 5'-cap (guanine-N7-)-methyltransferase activity"/>
    <property type="evidence" value="ECO:0007669"/>
    <property type="project" value="UniProtKB-EC"/>
</dbReference>
<dbReference type="GO" id="GO:0046983">
    <property type="term" value="F:protein dimerization activity"/>
    <property type="evidence" value="ECO:0007669"/>
    <property type="project" value="InterPro"/>
</dbReference>
<dbReference type="GO" id="GO:0003724">
    <property type="term" value="F:RNA helicase activity"/>
    <property type="evidence" value="ECO:0007669"/>
    <property type="project" value="UniProtKB-EC"/>
</dbReference>
<dbReference type="GO" id="GO:0003968">
    <property type="term" value="F:RNA-directed RNA polymerase activity"/>
    <property type="evidence" value="ECO:0007669"/>
    <property type="project" value="UniProtKB-KW"/>
</dbReference>
<dbReference type="GO" id="GO:0004252">
    <property type="term" value="F:serine-type endopeptidase activity"/>
    <property type="evidence" value="ECO:0007669"/>
    <property type="project" value="InterPro"/>
</dbReference>
<dbReference type="GO" id="GO:0005198">
    <property type="term" value="F:structural molecule activity"/>
    <property type="evidence" value="ECO:0007669"/>
    <property type="project" value="InterPro"/>
</dbReference>
<dbReference type="GO" id="GO:0075512">
    <property type="term" value="P:clathrin-dependent endocytosis of virus by host cell"/>
    <property type="evidence" value="ECO:0007669"/>
    <property type="project" value="UniProtKB-KW"/>
</dbReference>
<dbReference type="GO" id="GO:0039654">
    <property type="term" value="P:fusion of virus membrane with host endosome membrane"/>
    <property type="evidence" value="ECO:0007669"/>
    <property type="project" value="UniProtKB-KW"/>
</dbReference>
<dbReference type="GO" id="GO:0006508">
    <property type="term" value="P:proteolysis"/>
    <property type="evidence" value="ECO:0007669"/>
    <property type="project" value="UniProtKB-KW"/>
</dbReference>
<dbReference type="GO" id="GO:0039520">
    <property type="term" value="P:symbiont-mediated activation of host autophagy"/>
    <property type="evidence" value="ECO:0007669"/>
    <property type="project" value="UniProtKB-KW"/>
</dbReference>
<dbReference type="GO" id="GO:0039574">
    <property type="term" value="P:symbiont-mediated suppression of host JAK-STAT cascade via inhibition of host TYK2 activity"/>
    <property type="evidence" value="ECO:0007669"/>
    <property type="project" value="UniProtKB-KW"/>
</dbReference>
<dbReference type="GO" id="GO:0039563">
    <property type="term" value="P:symbiont-mediated suppression of host JAK-STAT cascade via inhibition of STAT1 activity"/>
    <property type="evidence" value="ECO:0007669"/>
    <property type="project" value="UniProtKB-KW"/>
</dbReference>
<dbReference type="GO" id="GO:0039564">
    <property type="term" value="P:symbiont-mediated suppression of host JAK-STAT cascade via inhibition of STAT2 activity"/>
    <property type="evidence" value="ECO:0007669"/>
    <property type="project" value="UniProtKB-KW"/>
</dbReference>
<dbReference type="GO" id="GO:0039502">
    <property type="term" value="P:symbiont-mediated suppression of host type I interferon-mediated signaling pathway"/>
    <property type="evidence" value="ECO:0007669"/>
    <property type="project" value="UniProtKB-KW"/>
</dbReference>
<dbReference type="GO" id="GO:0039694">
    <property type="term" value="P:viral RNA genome replication"/>
    <property type="evidence" value="ECO:0007669"/>
    <property type="project" value="InterPro"/>
</dbReference>
<dbReference type="GO" id="GO:0075523">
    <property type="term" value="P:viral translational frameshifting"/>
    <property type="evidence" value="ECO:0007669"/>
    <property type="project" value="UniProtKB-KW"/>
</dbReference>
<dbReference type="GO" id="GO:0019062">
    <property type="term" value="P:virion attachment to host cell"/>
    <property type="evidence" value="ECO:0007669"/>
    <property type="project" value="UniProtKB-KW"/>
</dbReference>
<dbReference type="CDD" id="cd20761">
    <property type="entry name" value="capping_2-OMTase_Flaviviridae"/>
    <property type="match status" value="1"/>
</dbReference>
<dbReference type="CDD" id="cd17931">
    <property type="entry name" value="DEXHc_viral_Ns3"/>
    <property type="match status" value="1"/>
</dbReference>
<dbReference type="CDD" id="cd12149">
    <property type="entry name" value="Flavi_E_C"/>
    <property type="match status" value="1"/>
</dbReference>
<dbReference type="CDD" id="cd17038">
    <property type="entry name" value="Flavi_M"/>
    <property type="match status" value="1"/>
</dbReference>
<dbReference type="CDD" id="cd23204">
    <property type="entry name" value="Flavivirus_RdRp"/>
    <property type="match status" value="1"/>
</dbReference>
<dbReference type="CDD" id="cd18806">
    <property type="entry name" value="SF2_C_viral"/>
    <property type="match status" value="1"/>
</dbReference>
<dbReference type="FunFam" id="1.20.1280.260:FF:000001">
    <property type="entry name" value="Envelope glycoprotein"/>
    <property type="match status" value="1"/>
</dbReference>
<dbReference type="FunFam" id="2.60.40.350:FF:000001">
    <property type="entry name" value="Envelope glycoprotein"/>
    <property type="match status" value="1"/>
</dbReference>
<dbReference type="FunFam" id="1.10.260.90:FF:000001">
    <property type="entry name" value="Genome polyprotein"/>
    <property type="match status" value="1"/>
</dbReference>
<dbReference type="FunFam" id="2.60.260.50:FF:000001">
    <property type="entry name" value="Genome polyprotein"/>
    <property type="match status" value="1"/>
</dbReference>
<dbReference type="FunFam" id="3.30.70.2840:FF:000001">
    <property type="entry name" value="Genome polyprotein"/>
    <property type="match status" value="1"/>
</dbReference>
<dbReference type="FunFam" id="3.30.70.2840:FF:000002">
    <property type="entry name" value="Genome polyprotein"/>
    <property type="match status" value="1"/>
</dbReference>
<dbReference type="FunFam" id="3.40.50.150:FF:000105">
    <property type="entry name" value="Genome polyprotein"/>
    <property type="match status" value="1"/>
</dbReference>
<dbReference type="FunFam" id="3.40.50.300:FF:000763">
    <property type="entry name" value="Genome polyprotein"/>
    <property type="match status" value="1"/>
</dbReference>
<dbReference type="Gene3D" id="1.10.10.930">
    <property type="match status" value="1"/>
</dbReference>
<dbReference type="Gene3D" id="1.10.260.90">
    <property type="match status" value="1"/>
</dbReference>
<dbReference type="Gene3D" id="1.20.1280.260">
    <property type="match status" value="1"/>
</dbReference>
<dbReference type="Gene3D" id="2.40.10.120">
    <property type="match status" value="2"/>
</dbReference>
<dbReference type="Gene3D" id="2.60.40.350">
    <property type="match status" value="1"/>
</dbReference>
<dbReference type="Gene3D" id="1.10.8.970">
    <property type="entry name" value="Flavivirus envelope glycoprotein M-like"/>
    <property type="match status" value="1"/>
</dbReference>
<dbReference type="Gene3D" id="2.60.260.50">
    <property type="entry name" value="Flavivirus polyprotein propeptide domain"/>
    <property type="match status" value="1"/>
</dbReference>
<dbReference type="Gene3D" id="3.30.70.2840">
    <property type="entry name" value="Flavivirus RNA-directed RNA polymerase, thumb domain"/>
    <property type="match status" value="3"/>
</dbReference>
<dbReference type="Gene3D" id="3.40.50.300">
    <property type="entry name" value="P-loop containing nucleotide triphosphate hydrolases"/>
    <property type="match status" value="2"/>
</dbReference>
<dbReference type="Gene3D" id="2.60.98.10">
    <property type="entry name" value="Tick-borne Encephalitis virus Glycoprotein, domain 1"/>
    <property type="match status" value="1"/>
</dbReference>
<dbReference type="Gene3D" id="3.40.50.150">
    <property type="entry name" value="Vaccinia Virus protein VP39"/>
    <property type="match status" value="1"/>
</dbReference>
<dbReference type="Gene3D" id="3.30.67.10">
    <property type="entry name" value="Viral Envelope Glycoprotein, domain 2"/>
    <property type="match status" value="1"/>
</dbReference>
<dbReference type="Gene3D" id="3.30.387.10">
    <property type="entry name" value="Viral Envelope Glycoprotein, domain 3"/>
    <property type="match status" value="1"/>
</dbReference>
<dbReference type="InterPro" id="IPR043502">
    <property type="entry name" value="DNA/RNA_pol_sf"/>
</dbReference>
<dbReference type="InterPro" id="IPR000069">
    <property type="entry name" value="Env_glycoprot_M_flavivir"/>
</dbReference>
<dbReference type="InterPro" id="IPR038302">
    <property type="entry name" value="Env_glycoprot_M_sf_flavivir"/>
</dbReference>
<dbReference type="InterPro" id="IPR013755">
    <property type="entry name" value="Flav_gly_cen_dom_subdom1"/>
</dbReference>
<dbReference type="InterPro" id="IPR001122">
    <property type="entry name" value="Flavi_capsidC"/>
</dbReference>
<dbReference type="InterPro" id="IPR037172">
    <property type="entry name" value="Flavi_capsidC_sf"/>
</dbReference>
<dbReference type="InterPro" id="IPR011492">
    <property type="entry name" value="Flavi_DEAD"/>
</dbReference>
<dbReference type="InterPro" id="IPR027287">
    <property type="entry name" value="Flavi_E_Ig-like"/>
</dbReference>
<dbReference type="InterPro" id="IPR026470">
    <property type="entry name" value="Flavi_E_Stem/Anchor_dom"/>
</dbReference>
<dbReference type="InterPro" id="IPR038345">
    <property type="entry name" value="Flavi_E_Stem/Anchor_dom_sf"/>
</dbReference>
<dbReference type="InterPro" id="IPR011998">
    <property type="entry name" value="Flavi_Glycoprot_E_cen/dimer"/>
</dbReference>
<dbReference type="InterPro" id="IPR001157">
    <property type="entry name" value="Flavi_NS1"/>
</dbReference>
<dbReference type="InterPro" id="IPR000752">
    <property type="entry name" value="Flavi_NS2A"/>
</dbReference>
<dbReference type="InterPro" id="IPR000487">
    <property type="entry name" value="Flavi_NS2B"/>
</dbReference>
<dbReference type="InterPro" id="IPR001850">
    <property type="entry name" value="Flavi_NS3_S7"/>
</dbReference>
<dbReference type="InterPro" id="IPR000404">
    <property type="entry name" value="Flavi_NS4A"/>
</dbReference>
<dbReference type="InterPro" id="IPR001528">
    <property type="entry name" value="Flavi_NS4B"/>
</dbReference>
<dbReference type="InterPro" id="IPR046811">
    <property type="entry name" value="Flavi_NS5_thumb"/>
</dbReference>
<dbReference type="InterPro" id="IPR002535">
    <property type="entry name" value="Flavi_propep"/>
</dbReference>
<dbReference type="InterPro" id="IPR038688">
    <property type="entry name" value="Flavi_propep_sf"/>
</dbReference>
<dbReference type="InterPro" id="IPR047530">
    <property type="entry name" value="Flavi_RdRp"/>
</dbReference>
<dbReference type="InterPro" id="IPR000208">
    <property type="entry name" value="Flavi_RdRp_fingers/palm"/>
</dbReference>
<dbReference type="InterPro" id="IPR000336">
    <property type="entry name" value="Flavivir/Alphavir_Ig-like_sf"/>
</dbReference>
<dbReference type="InterPro" id="IPR014412">
    <property type="entry name" value="Gen_Poly_FLV"/>
</dbReference>
<dbReference type="InterPro" id="IPR036253">
    <property type="entry name" value="Glycoprot_cen/dimer_sf"/>
</dbReference>
<dbReference type="InterPro" id="IPR038055">
    <property type="entry name" value="Glycoprot_E_dimer_dom"/>
</dbReference>
<dbReference type="InterPro" id="IPR013756">
    <property type="entry name" value="GlyE_cen_dom_subdom2"/>
</dbReference>
<dbReference type="InterPro" id="IPR014001">
    <property type="entry name" value="Helicase_ATP-bd"/>
</dbReference>
<dbReference type="InterPro" id="IPR001650">
    <property type="entry name" value="Helicase_C-like"/>
</dbReference>
<dbReference type="InterPro" id="IPR014756">
    <property type="entry name" value="Ig_E-set"/>
</dbReference>
<dbReference type="InterPro" id="IPR026490">
    <property type="entry name" value="mRNA_cap_0/1_MeTrfase"/>
</dbReference>
<dbReference type="InterPro" id="IPR049486">
    <property type="entry name" value="NS3-hel_C_flaviviridae"/>
</dbReference>
<dbReference type="InterPro" id="IPR027417">
    <property type="entry name" value="P-loop_NTPase"/>
</dbReference>
<dbReference type="InterPro" id="IPR009003">
    <property type="entry name" value="Peptidase_S1_PA"/>
</dbReference>
<dbReference type="InterPro" id="IPR007094">
    <property type="entry name" value="RNA-dir_pol_PSvirus"/>
</dbReference>
<dbReference type="InterPro" id="IPR002877">
    <property type="entry name" value="RNA_MeTrfase_FtsJ_dom"/>
</dbReference>
<dbReference type="InterPro" id="IPR029063">
    <property type="entry name" value="SAM-dependent_MTases_sf"/>
</dbReference>
<dbReference type="NCBIfam" id="TIGR04240">
    <property type="entry name" value="flavi_E_stem"/>
    <property type="match status" value="1"/>
</dbReference>
<dbReference type="Pfam" id="PF20907">
    <property type="entry name" value="Flav_NS3-hel_C"/>
    <property type="match status" value="1"/>
</dbReference>
<dbReference type="Pfam" id="PF01003">
    <property type="entry name" value="Flavi_capsid"/>
    <property type="match status" value="1"/>
</dbReference>
<dbReference type="Pfam" id="PF07652">
    <property type="entry name" value="Flavi_DEAD"/>
    <property type="match status" value="1"/>
</dbReference>
<dbReference type="Pfam" id="PF21659">
    <property type="entry name" value="Flavi_E_stem"/>
    <property type="match status" value="1"/>
</dbReference>
<dbReference type="Pfam" id="PF02832">
    <property type="entry name" value="Flavi_glycop_C"/>
    <property type="match status" value="1"/>
</dbReference>
<dbReference type="Pfam" id="PF00869">
    <property type="entry name" value="Flavi_glycoprot"/>
    <property type="match status" value="1"/>
</dbReference>
<dbReference type="Pfam" id="PF01004">
    <property type="entry name" value="Flavi_M"/>
    <property type="match status" value="1"/>
</dbReference>
<dbReference type="Pfam" id="PF00948">
    <property type="entry name" value="Flavi_NS1"/>
    <property type="match status" value="1"/>
</dbReference>
<dbReference type="Pfam" id="PF01005">
    <property type="entry name" value="Flavi_NS2A"/>
    <property type="match status" value="1"/>
</dbReference>
<dbReference type="Pfam" id="PF01002">
    <property type="entry name" value="Flavi_NS2B"/>
    <property type="match status" value="1"/>
</dbReference>
<dbReference type="Pfam" id="PF01350">
    <property type="entry name" value="Flavi_NS4A"/>
    <property type="match status" value="1"/>
</dbReference>
<dbReference type="Pfam" id="PF01349">
    <property type="entry name" value="Flavi_NS4B"/>
    <property type="match status" value="1"/>
</dbReference>
<dbReference type="Pfam" id="PF00972">
    <property type="entry name" value="Flavi_NS5"/>
    <property type="match status" value="1"/>
</dbReference>
<dbReference type="Pfam" id="PF20483">
    <property type="entry name" value="Flavi_NS5_thumb"/>
    <property type="match status" value="1"/>
</dbReference>
<dbReference type="Pfam" id="PF01570">
    <property type="entry name" value="Flavi_propep"/>
    <property type="match status" value="1"/>
</dbReference>
<dbReference type="Pfam" id="PF01728">
    <property type="entry name" value="FtsJ"/>
    <property type="match status" value="1"/>
</dbReference>
<dbReference type="Pfam" id="PF00949">
    <property type="entry name" value="Peptidase_S7"/>
    <property type="match status" value="1"/>
</dbReference>
<dbReference type="PIRSF" id="PIRSF003817">
    <property type="entry name" value="Gen_Poly_FLV"/>
    <property type="match status" value="1"/>
</dbReference>
<dbReference type="SMART" id="SM00487">
    <property type="entry name" value="DEXDc"/>
    <property type="match status" value="1"/>
</dbReference>
<dbReference type="SMART" id="SM00490">
    <property type="entry name" value="HELICc"/>
    <property type="match status" value="1"/>
</dbReference>
<dbReference type="SUPFAM" id="SSF56672">
    <property type="entry name" value="DNA/RNA polymerases"/>
    <property type="match status" value="1"/>
</dbReference>
<dbReference type="SUPFAM" id="SSF81296">
    <property type="entry name" value="E set domains"/>
    <property type="match status" value="1"/>
</dbReference>
<dbReference type="SUPFAM" id="SSF101257">
    <property type="entry name" value="Flavivirus capsid protein C"/>
    <property type="match status" value="1"/>
</dbReference>
<dbReference type="SUPFAM" id="SSF52540">
    <property type="entry name" value="P-loop containing nucleoside triphosphate hydrolases"/>
    <property type="match status" value="2"/>
</dbReference>
<dbReference type="SUPFAM" id="SSF53335">
    <property type="entry name" value="S-adenosyl-L-methionine-dependent methyltransferases"/>
    <property type="match status" value="1"/>
</dbReference>
<dbReference type="SUPFAM" id="SSF50494">
    <property type="entry name" value="Trypsin-like serine proteases"/>
    <property type="match status" value="1"/>
</dbReference>
<dbReference type="SUPFAM" id="SSF56983">
    <property type="entry name" value="Viral glycoprotein, central and dimerisation domains"/>
    <property type="match status" value="1"/>
</dbReference>
<dbReference type="PROSITE" id="PS51527">
    <property type="entry name" value="FLAVIVIRUS_NS2B"/>
    <property type="match status" value="1"/>
</dbReference>
<dbReference type="PROSITE" id="PS51528">
    <property type="entry name" value="FLAVIVIRUS_NS3PRO"/>
    <property type="match status" value="1"/>
</dbReference>
<dbReference type="PROSITE" id="PS51192">
    <property type="entry name" value="HELICASE_ATP_BIND_1"/>
    <property type="match status" value="1"/>
</dbReference>
<dbReference type="PROSITE" id="PS51194">
    <property type="entry name" value="HELICASE_CTER"/>
    <property type="match status" value="1"/>
</dbReference>
<dbReference type="PROSITE" id="PS50507">
    <property type="entry name" value="RDRP_SSRNA_POS"/>
    <property type="match status" value="1"/>
</dbReference>
<dbReference type="PROSITE" id="PS51591">
    <property type="entry name" value="RNA_CAP01_NS5_MT"/>
    <property type="match status" value="1"/>
</dbReference>